<keyword id="KW-0066">ATP synthesis</keyword>
<keyword id="KW-0375">Hydrogen ion transport</keyword>
<keyword id="KW-0406">Ion transport</keyword>
<keyword id="KW-0813">Transport</keyword>
<reference key="1">
    <citation type="journal article" date="2008" name="J. Bacteriol.">
        <title>Genome sequence of a nephritogenic and highly transformable M49 strain of Streptococcus pyogenes.</title>
        <authorList>
            <person name="McShan W.M."/>
            <person name="Ferretti J.J."/>
            <person name="Karasawa T."/>
            <person name="Suvorov A.N."/>
            <person name="Lin S."/>
            <person name="Qin B."/>
            <person name="Jia H."/>
            <person name="Kenton S."/>
            <person name="Najar F."/>
            <person name="Wu H."/>
            <person name="Scott J."/>
            <person name="Roe B.A."/>
            <person name="Savic D.J."/>
        </authorList>
    </citation>
    <scope>NUCLEOTIDE SEQUENCE [LARGE SCALE GENOMIC DNA]</scope>
    <source>
        <strain>NZ131</strain>
    </source>
</reference>
<dbReference type="EMBL" id="CP000829">
    <property type="protein sequence ID" value="ACI60486.1"/>
    <property type="molecule type" value="Genomic_DNA"/>
</dbReference>
<dbReference type="SMR" id="B5XJH4"/>
<dbReference type="KEGG" id="soz:Spy49_0136"/>
<dbReference type="HOGENOM" id="CLU_022916_0_0_9"/>
<dbReference type="Proteomes" id="UP000001039">
    <property type="component" value="Chromosome"/>
</dbReference>
<dbReference type="GO" id="GO:0005524">
    <property type="term" value="F:ATP binding"/>
    <property type="evidence" value="ECO:0007669"/>
    <property type="project" value="UniProtKB-UniRule"/>
</dbReference>
<dbReference type="GO" id="GO:0046933">
    <property type="term" value="F:proton-transporting ATP synthase activity, rotational mechanism"/>
    <property type="evidence" value="ECO:0007669"/>
    <property type="project" value="UniProtKB-UniRule"/>
</dbReference>
<dbReference type="GO" id="GO:0042777">
    <property type="term" value="P:proton motive force-driven plasma membrane ATP synthesis"/>
    <property type="evidence" value="ECO:0007669"/>
    <property type="project" value="UniProtKB-UniRule"/>
</dbReference>
<dbReference type="CDD" id="cd18112">
    <property type="entry name" value="ATP-synt_V_A-type_beta_C"/>
    <property type="match status" value="1"/>
</dbReference>
<dbReference type="CDD" id="cd18118">
    <property type="entry name" value="ATP-synt_V_A-type_beta_N"/>
    <property type="match status" value="1"/>
</dbReference>
<dbReference type="CDD" id="cd01135">
    <property type="entry name" value="V_A-ATPase_B"/>
    <property type="match status" value="1"/>
</dbReference>
<dbReference type="Gene3D" id="3.40.50.12240">
    <property type="match status" value="1"/>
</dbReference>
<dbReference type="HAMAP" id="MF_00310">
    <property type="entry name" value="ATP_synth_B_arch"/>
    <property type="match status" value="1"/>
</dbReference>
<dbReference type="InterPro" id="IPR055190">
    <property type="entry name" value="ATP-synt_VA_C"/>
</dbReference>
<dbReference type="InterPro" id="IPR020003">
    <property type="entry name" value="ATPase_a/bsu_AS"/>
</dbReference>
<dbReference type="InterPro" id="IPR004100">
    <property type="entry name" value="ATPase_F1/V1/A1_a/bsu_N"/>
</dbReference>
<dbReference type="InterPro" id="IPR000194">
    <property type="entry name" value="ATPase_F1/V1/A1_a/bsu_nucl-bd"/>
</dbReference>
<dbReference type="InterPro" id="IPR027417">
    <property type="entry name" value="P-loop_NTPase"/>
</dbReference>
<dbReference type="InterPro" id="IPR022879">
    <property type="entry name" value="V-ATPase_su_B/beta"/>
</dbReference>
<dbReference type="NCBIfam" id="NF003235">
    <property type="entry name" value="PRK04196.1"/>
    <property type="match status" value="1"/>
</dbReference>
<dbReference type="PANTHER" id="PTHR43389">
    <property type="entry name" value="V-TYPE PROTON ATPASE SUBUNIT B"/>
    <property type="match status" value="1"/>
</dbReference>
<dbReference type="PANTHER" id="PTHR43389:SF4">
    <property type="entry name" value="V-TYPE PROTON ATPASE SUBUNIT B"/>
    <property type="match status" value="1"/>
</dbReference>
<dbReference type="Pfam" id="PF00006">
    <property type="entry name" value="ATP-synt_ab"/>
    <property type="match status" value="1"/>
</dbReference>
<dbReference type="Pfam" id="PF02874">
    <property type="entry name" value="ATP-synt_ab_N"/>
    <property type="match status" value="1"/>
</dbReference>
<dbReference type="Pfam" id="PF22919">
    <property type="entry name" value="ATP-synt_VA_C"/>
    <property type="match status" value="1"/>
</dbReference>
<dbReference type="PIRSF" id="PIRSF039114">
    <property type="entry name" value="V-ATPsynth_beta/V-ATPase_B"/>
    <property type="match status" value="1"/>
</dbReference>
<dbReference type="SUPFAM" id="SSF47917">
    <property type="entry name" value="C-terminal domain of alpha and beta subunits of F1 ATP synthase"/>
    <property type="match status" value="1"/>
</dbReference>
<dbReference type="SUPFAM" id="SSF52540">
    <property type="entry name" value="P-loop containing nucleoside triphosphate hydrolases"/>
    <property type="match status" value="1"/>
</dbReference>
<dbReference type="PROSITE" id="PS00152">
    <property type="entry name" value="ATPASE_ALPHA_BETA"/>
    <property type="match status" value="1"/>
</dbReference>
<protein>
    <recommendedName>
        <fullName evidence="1">V-type ATP synthase beta chain</fullName>
    </recommendedName>
    <alternativeName>
        <fullName evidence="1">V-ATPase subunit B</fullName>
    </alternativeName>
</protein>
<organism>
    <name type="scientific">Streptococcus pyogenes serotype M49 (strain NZ131)</name>
    <dbReference type="NCBI Taxonomy" id="471876"/>
    <lineage>
        <taxon>Bacteria</taxon>
        <taxon>Bacillati</taxon>
        <taxon>Bacillota</taxon>
        <taxon>Bacilli</taxon>
        <taxon>Lactobacillales</taxon>
        <taxon>Streptococcaceae</taxon>
        <taxon>Streptococcus</taxon>
    </lineage>
</organism>
<accession>B5XJH4</accession>
<name>VATB_STRPZ</name>
<comment type="function">
    <text evidence="1">Produces ATP from ADP in the presence of a proton gradient across the membrane. The V-type beta chain is a regulatory subunit.</text>
</comment>
<comment type="similarity">
    <text evidence="1">Belongs to the ATPase alpha/beta chains family.</text>
</comment>
<feature type="chain" id="PRO_1000115666" description="V-type ATP synthase beta chain">
    <location>
        <begin position="1"/>
        <end position="471"/>
    </location>
</feature>
<gene>
    <name evidence="1" type="primary">atpB</name>
    <name type="ordered locus">Spy49_0136</name>
</gene>
<sequence length="471" mass="52348">MSVLKEYRTVSEVVGPLMIVDQVAGVHYNELVDITLHNGERRKGQVLEVQGDKAMVQLFEGSTGINLAKTKVRFTGHSLELAVSEDMVGRIFDGMGQPIDGGPELIPEKYLDIDGQAINPVARDYPDEFIQTGISAIDHLNTLVRGQKLPVFSGSGLPHNELAAQIARQATVLNSDDNFAVVFAAMGITFEEAEFFMNDLRETGAIDRSVLFINLANDPAIERIATPRIALTTAEYLAYEKGMHVLVIMTDMTNYCEALREVSAARREVPGRRGYPGYLYTNLSTLYERAGRLIGKKGSVTQIPILTMPEDDITHPIPDLTGYITEGQIILSQELYKNGFRPPINVLPSLSRLKDKGSGEGKTRQDHAATMNQLFAAYAQGKQAKELAVVLGESALSETDKLYVAFTNRFEEEYINQGFYTNRSIEESLDLGWELLSILPRTELKRIKDDMLDRYLPKADTTMTKVFVAND</sequence>
<proteinExistence type="inferred from homology"/>
<evidence type="ECO:0000255" key="1">
    <source>
        <dbReference type="HAMAP-Rule" id="MF_00310"/>
    </source>
</evidence>